<feature type="chain" id="PRO_0000187670" description="Synaptopodin">
    <location>
        <begin position="1"/>
        <end position="929"/>
    </location>
</feature>
<feature type="region of interest" description="Disordered" evidence="4">
    <location>
        <begin position="1"/>
        <end position="260"/>
    </location>
</feature>
<feature type="region of interest" description="Disordered" evidence="4">
    <location>
        <begin position="285"/>
        <end position="389"/>
    </location>
</feature>
<feature type="region of interest" description="Disordered" evidence="4">
    <location>
        <begin position="509"/>
        <end position="558"/>
    </location>
</feature>
<feature type="region of interest" description="Disordered" evidence="4">
    <location>
        <begin position="589"/>
        <end position="610"/>
    </location>
</feature>
<feature type="region of interest" description="Disordered" evidence="4">
    <location>
        <begin position="630"/>
        <end position="726"/>
    </location>
</feature>
<feature type="region of interest" description="Disordered" evidence="4">
    <location>
        <begin position="740"/>
        <end position="763"/>
    </location>
</feature>
<feature type="region of interest" description="Disordered" evidence="4">
    <location>
        <begin position="826"/>
        <end position="916"/>
    </location>
</feature>
<feature type="short sequence motif" description="PPxY motif">
    <location>
        <begin position="562"/>
        <end position="565"/>
    </location>
</feature>
<feature type="short sequence motif" description="PPxY motif">
    <location>
        <begin position="581"/>
        <end position="584"/>
    </location>
</feature>
<feature type="compositionally biased region" description="Pro residues" evidence="4">
    <location>
        <begin position="1"/>
        <end position="12"/>
    </location>
</feature>
<feature type="compositionally biased region" description="Basic and acidic residues" evidence="4">
    <location>
        <begin position="60"/>
        <end position="69"/>
    </location>
</feature>
<feature type="compositionally biased region" description="Basic and acidic residues" evidence="4">
    <location>
        <begin position="91"/>
        <end position="110"/>
    </location>
</feature>
<feature type="compositionally biased region" description="Basic and acidic residues" evidence="4">
    <location>
        <begin position="142"/>
        <end position="151"/>
    </location>
</feature>
<feature type="compositionally biased region" description="Polar residues" evidence="4">
    <location>
        <begin position="152"/>
        <end position="170"/>
    </location>
</feature>
<feature type="compositionally biased region" description="Pro residues" evidence="4">
    <location>
        <begin position="224"/>
        <end position="234"/>
    </location>
</feature>
<feature type="compositionally biased region" description="Low complexity" evidence="4">
    <location>
        <begin position="317"/>
        <end position="332"/>
    </location>
</feature>
<feature type="compositionally biased region" description="Polar residues" evidence="4">
    <location>
        <begin position="333"/>
        <end position="379"/>
    </location>
</feature>
<feature type="compositionally biased region" description="Basic and acidic residues" evidence="4">
    <location>
        <begin position="646"/>
        <end position="656"/>
    </location>
</feature>
<feature type="compositionally biased region" description="Low complexity" evidence="4">
    <location>
        <begin position="685"/>
        <end position="698"/>
    </location>
</feature>
<feature type="compositionally biased region" description="Low complexity" evidence="4">
    <location>
        <begin position="826"/>
        <end position="839"/>
    </location>
</feature>
<feature type="compositionally biased region" description="Polar residues" evidence="4">
    <location>
        <begin position="866"/>
        <end position="880"/>
    </location>
</feature>
<feature type="modified residue" description="Phosphoserine" evidence="2">
    <location>
        <position position="140"/>
    </location>
</feature>
<feature type="modified residue" description="Phosphoserine" evidence="2">
    <location>
        <position position="207"/>
    </location>
</feature>
<feature type="modified residue" description="Phosphoserine" evidence="18 19 21 22">
    <location>
        <position position="263"/>
    </location>
</feature>
<feature type="modified residue" description="Phosphoserine" evidence="2">
    <location>
        <position position="501"/>
    </location>
</feature>
<feature type="modified residue" description="Phosphoserine" evidence="18 21">
    <location>
        <position position="525"/>
    </location>
</feature>
<feature type="modified residue" description="Phosphothreonine" evidence="3">
    <location>
        <position position="560"/>
    </location>
</feature>
<feature type="modified residue" description="Phosphoserine" evidence="18 19 21 22">
    <location>
        <position position="580"/>
    </location>
</feature>
<feature type="modified residue" description="Phosphoserine" evidence="16 17 18 19 21 22">
    <location>
        <position position="685"/>
    </location>
</feature>
<feature type="modified residue" description="Phosphoserine" evidence="18 21">
    <location>
        <position position="702"/>
    </location>
</feature>
<feature type="modified residue" description="Phosphothreonine" evidence="18 19">
    <location>
        <position position="746"/>
    </location>
</feature>
<feature type="modified residue" description="Phosphoserine" evidence="18 21 22">
    <location>
        <position position="754"/>
    </location>
</feature>
<feature type="modified residue" description="Phosphoserine" evidence="2">
    <location>
        <position position="758"/>
    </location>
</feature>
<feature type="modified residue" description="Phosphoserine" evidence="3">
    <location>
        <position position="779"/>
    </location>
</feature>
<feature type="modified residue" description="Phosphothreonine" evidence="2">
    <location>
        <position position="783"/>
    </location>
</feature>
<feature type="modified residue" description="Phosphoserine" evidence="18 19 21 22">
    <location>
        <position position="833"/>
    </location>
</feature>
<feature type="modified residue" description="Phosphoserine" evidence="22">
    <location>
        <position position="854"/>
    </location>
</feature>
<feature type="glycosylation site" description="N-linked (GlcNAc...) asparagine" evidence="7">
    <location>
        <position position="330"/>
    </location>
</feature>
<feature type="splice variant" id="VSP_010476" description="In isoform 2 and isoform 3." evidence="10 11 12 13 14">
    <location>
        <begin position="1"/>
        <end position="244"/>
    </location>
</feature>
<feature type="splice variant" id="VSP_010477" description="In isoform 2." evidence="10 14">
    <original>VWKPSFCFK</original>
    <variation>DRRESLPTSPPWTPGASRPPSSLDGWVSPGPWEPGRGSSMSSPPPLPPPPPMSPSWSERSVSPLRPETEARPPSRQLQALLARNIINAARRKSASPRSAGAENPRPFSPPRAPPPPPPPPPPPPRMRSPQPARPGSAAVPGAAFAPIPRSPLPAGPSSCTSPRSPLPAPPRPFLYRRSPTDSDVSLDSEDSGAKSPGILGYNICPRGWNGSLRLKRGSLPAEASCTT</variation>
    <location>
        <begin position="921"/>
        <end position="929"/>
    </location>
</feature>
<feature type="sequence conflict" description="In Ref. 5; CAD38532." evidence="15" ref="5">
    <original>Q</original>
    <variation>R</variation>
    <location>
        <position position="95"/>
    </location>
</feature>
<feature type="sequence conflict" description="In Ref. 4." evidence="15" ref="4">
    <original>E</original>
    <variation>G</variation>
    <location>
        <position position="417"/>
    </location>
</feature>
<feature type="sequence conflict" description="In Ref. 1; CAA71955." evidence="15" ref="1">
    <original>A</original>
    <variation>V</variation>
    <location>
        <position position="428"/>
    </location>
</feature>
<feature type="sequence conflict" description="In Ref. 1; CAA71955." evidence="15" ref="1">
    <original>S</original>
    <variation>G</variation>
    <location>
        <position position="744"/>
    </location>
</feature>
<feature type="sequence conflict" description="In Ref. 4." evidence="15" ref="4">
    <original>K</original>
    <variation>R</variation>
    <location>
        <position position="836"/>
    </location>
</feature>
<feature type="modified residue" description="N-acetylmethionine" evidence="20">
    <location sequence="Q8N3V7-2">
        <position position="1"/>
    </location>
</feature>
<feature type="modified residue" description="Phosphoserine" evidence="22">
    <location sequence="Q8N3V7-2">
        <position position="738"/>
    </location>
</feature>
<feature type="modified residue" description="Phosphoserine" evidence="22">
    <location sequence="Q8N3V7-2">
        <position position="784"/>
    </location>
</feature>
<feature type="modified residue" description="Phosphoserine" evidence="22">
    <location sequence="Q8N3V7-2">
        <position position="804"/>
    </location>
</feature>
<feature type="modified residue" description="Phosphoserine" evidence="22">
    <location sequence="Q8N3V7-2">
        <position position="812"/>
    </location>
</feature>
<feature type="modified residue" description="Phosphoserine" evidence="18 22">
    <location sequence="Q8N3V7-2">
        <position position="826"/>
    </location>
</feature>
<feature type="modified residue" description="Phosphoserine" evidence="19 22">
    <location sequence="Q8N3V7-2">
        <position position="854"/>
    </location>
</feature>
<feature type="modified residue" description="Phosphoserine" evidence="16 17 19">
    <location sequence="Q8N3V7-2">
        <position position="871"/>
    </location>
</feature>
<feature type="modified residue" description="Phosphoserine" evidence="18 22">
    <location sequence="Q8N3V7-2">
        <position position="894"/>
    </location>
</feature>
<feature type="modified residue" description="N-acetylmethionine" evidence="20">
    <location sequence="Q8N3V7-3">
        <position position="1"/>
    </location>
</feature>
<accession>Q8N3V7</accession>
<accession>A5PKZ8</accession>
<accession>D3DQG8</accession>
<accession>O15271</accession>
<accession>Q9UPX1</accession>
<proteinExistence type="evidence at protein level"/>
<keyword id="KW-0007">Acetylation</keyword>
<keyword id="KW-0009">Actin-binding</keyword>
<keyword id="KW-0025">Alternative splicing</keyword>
<keyword id="KW-0965">Cell junction</keyword>
<keyword id="KW-0966">Cell projection</keyword>
<keyword id="KW-0963">Cytoplasm</keyword>
<keyword id="KW-0206">Cytoskeleton</keyword>
<keyword id="KW-0325">Glycoprotein</keyword>
<keyword id="KW-0597">Phosphoprotein</keyword>
<keyword id="KW-1267">Proteomics identification</keyword>
<keyword id="KW-1185">Reference proteome</keyword>
<keyword id="KW-0770">Synapse</keyword>
<keyword id="KW-0796">Tight junction</keyword>
<gene>
    <name type="primary">SYNPO</name>
    <name type="synonym">KIAA1029</name>
</gene>
<sequence>MLGPHLPPPPLAPSEGRPTPCAFQIPDGSYRCLALEAEESSGEEGLQGEVGPTDLEEDEGVSRSGDDSACRVTQGTPQLPKALGIQPPSCSREEQGASQHDDRASQDWDVVKAGQMMTASPSPGPGPRVAQKPALGRSTSLTEKDLKEAKARSQQIAAQLTTPPSSNSRGVQLFNRRRQRVNEFTLESHGQRGQKPSQESLRVLPSSLPGHAPGLSLSSTSLPEPGPPRHPSPQSPDRGVPGHSMEGYSEEASLLRHLEKVASEEEEVPLVVYLKENAALLTANGLHLSQNREAQQSSPAPPPAEVHSPAADVNQNLASPSATLTTPTSNSSHNPPATDVNQNPPATVVPQSLPLSSIQQNSSEAQLPSNGTGPASKPSTLCADGQPQAPAEEVRCSTLLIDKVSTPATTTSTFSREATLIPSSRPPASDFMSSSLLIDIQPNTLVVSADQEMSGRAAATTPTKVYSEVHFTLAKPPSVVNRTARPFGIQAPGGTSQMERSPMLERRHFGEKAPAPQPPSLPDRSPRPQRHIMSRSPMVERRMMGQRSPASERRPLGNFTAPPTYTETLSTAPLASWVRSPPSYSVLYPSSDPKSSHLKGQAVPASKTGILEESMARRGSRKSMFTFVEKPKVTPNPDLLDLVQTADEKRRQRDQGEVGVEEEPFALGAEASNFQQEPAPRDRASPAAAEEVVPEWASCLKSPRIQAKPKPKPNQNLSEASGKGAELYARRQSRMEKYVIESSSHTPELARCPSPTMSLPSSWKYPTNAPGAFRVASRSPARTPPASLYHGYLPENGVLRPEPTKQPPYQLRPSLFVLSPIKEPAKVSPRAASPAKPSSLDLVPNLPKGALPPSPALPRPSRSSPGLYTSPGQDSLQPTAVSPPYGGDISPVSPSRAWSPRAKQAPRPSFSTRNAGIEAQVWKPSFCFK</sequence>
<protein>
    <recommendedName>
        <fullName>Synaptopodin</fullName>
    </recommendedName>
</protein>
<organism>
    <name type="scientific">Homo sapiens</name>
    <name type="common">Human</name>
    <dbReference type="NCBI Taxonomy" id="9606"/>
    <lineage>
        <taxon>Eukaryota</taxon>
        <taxon>Metazoa</taxon>
        <taxon>Chordata</taxon>
        <taxon>Craniata</taxon>
        <taxon>Vertebrata</taxon>
        <taxon>Euteleostomi</taxon>
        <taxon>Mammalia</taxon>
        <taxon>Eutheria</taxon>
        <taxon>Euarchontoglires</taxon>
        <taxon>Primates</taxon>
        <taxon>Haplorrhini</taxon>
        <taxon>Catarrhini</taxon>
        <taxon>Hominidae</taxon>
        <taxon>Homo</taxon>
    </lineage>
</organism>
<evidence type="ECO:0000250" key="1"/>
<evidence type="ECO:0000250" key="2">
    <source>
        <dbReference type="UniProtKB" id="Q8CC35"/>
    </source>
</evidence>
<evidence type="ECO:0000250" key="3">
    <source>
        <dbReference type="UniProtKB" id="Q9Z327"/>
    </source>
</evidence>
<evidence type="ECO:0000256" key="4">
    <source>
        <dbReference type="SAM" id="MobiDB-lite"/>
    </source>
</evidence>
<evidence type="ECO:0000269" key="5">
    <source>
    </source>
</evidence>
<evidence type="ECO:0000269" key="6">
    <source>
    </source>
</evidence>
<evidence type="ECO:0000269" key="7">
    <source>
    </source>
</evidence>
<evidence type="ECO:0000269" key="8">
    <source>
    </source>
</evidence>
<evidence type="ECO:0000269" key="9">
    <source>
    </source>
</evidence>
<evidence type="ECO:0000303" key="10">
    <source>
    </source>
</evidence>
<evidence type="ECO:0000303" key="11">
    <source>
    </source>
</evidence>
<evidence type="ECO:0000303" key="12">
    <source>
    </source>
</evidence>
<evidence type="ECO:0000303" key="13">
    <source>
    </source>
</evidence>
<evidence type="ECO:0000303" key="14">
    <source ref="2"/>
</evidence>
<evidence type="ECO:0000305" key="15"/>
<evidence type="ECO:0007744" key="16">
    <source>
    </source>
</evidence>
<evidence type="ECO:0007744" key="17">
    <source>
    </source>
</evidence>
<evidence type="ECO:0007744" key="18">
    <source>
    </source>
</evidence>
<evidence type="ECO:0007744" key="19">
    <source>
    </source>
</evidence>
<evidence type="ECO:0007744" key="20">
    <source>
    </source>
</evidence>
<evidence type="ECO:0007744" key="21">
    <source>
    </source>
</evidence>
<evidence type="ECO:0007744" key="22">
    <source>
    </source>
</evidence>
<comment type="function">
    <text evidence="1">Actin-associated protein that may play a role in modulating actin-based shape and motility of dendritic spines and renal podocyte foot processes. Seems to be essential for the formation of spine apparatuses in spines of telencephalic neurons, which is involved in synaptic plasticity (By similarity).</text>
</comment>
<comment type="subunit">
    <text evidence="1 5 6">Interacts with BAIAP1. Interacts with actin (By similarity). Interacts (via PPxY motifs) with WWC1 (via WW domains).</text>
</comment>
<comment type="interaction">
    <interactant intactId="EBI-352936">
        <id>Q8N3V7</id>
    </interactant>
    <interactant intactId="EBI-351710">
        <id>P12814</id>
        <label>ACTN1</label>
    </interactant>
    <organismsDiffer>false</organismsDiffer>
    <experiments>2</experiments>
</comment>
<comment type="interaction">
    <interactant intactId="EBI-352936">
        <id>Q8N3V7</id>
    </interactant>
    <interactant intactId="EBI-374880">
        <id>Q99459</id>
        <label>CDC5L</label>
    </interactant>
    <organismsDiffer>false</organismsDiffer>
    <experiments>5</experiments>
</comment>
<comment type="interaction">
    <interactant intactId="EBI-352936">
        <id>Q8N3V7</id>
    </interactant>
    <interactant intactId="EBI-743117">
        <id>Q96ES7</id>
        <label>SGF29</label>
    </interactant>
    <organismsDiffer>false</organismsDiffer>
    <experiments>5</experiments>
</comment>
<comment type="subcellular location">
    <subcellularLocation>
        <location evidence="2">Cytoplasm</location>
        <location evidence="2">Cytoskeleton</location>
    </subcellularLocation>
    <subcellularLocation>
        <location evidence="2">Cell junction</location>
        <location evidence="2">Tight junction</location>
    </subcellularLocation>
    <subcellularLocation>
        <location evidence="2">Perikaryon</location>
    </subcellularLocation>
    <subcellularLocation>
        <location evidence="2">Cell projection</location>
        <location evidence="2">Dendritic spine</location>
    </subcellularLocation>
    <subcellularLocation>
        <location evidence="2">Postsynaptic density</location>
    </subcellularLocation>
    <subcellularLocation>
        <location evidence="2">Synapse</location>
    </subcellularLocation>
    <subcellularLocation>
        <location evidence="8">Cytoplasm</location>
        <location evidence="8">Cytosol</location>
    </subcellularLocation>
    <text evidence="2">Localized at the tight junction of cells. In brain, localized to the postsynaptic densities and in the perikarya. Associated with dendritic spines of a subset of synapses.</text>
</comment>
<comment type="alternative products">
    <event type="alternative splicing"/>
    <isoform>
        <id>Q8N3V7-1</id>
        <name>1</name>
        <sequence type="displayed"/>
    </isoform>
    <isoform>
        <id>Q8N3V7-2</id>
        <name>2</name>
        <sequence type="described" ref="VSP_010476 VSP_010477"/>
    </isoform>
    <isoform>
        <id>Q8N3V7-3</id>
        <name>3</name>
        <sequence type="described" ref="VSP_010476"/>
    </isoform>
</comment>
<comment type="tissue specificity">
    <text evidence="9">Expressed in cerebral cortex.</text>
</comment>
<comment type="PTM">
    <text evidence="1">O-glycosylated.</text>
</comment>
<comment type="similarity">
    <text evidence="15">Belongs to the synaptopodin family.</text>
</comment>
<comment type="sequence caution" evidence="15">
    <conflict type="erroneous initiation">
        <sequence resource="EMBL-CDS" id="BAA82981"/>
    </conflict>
</comment>
<reference key="1">
    <citation type="journal article" date="1997" name="J. Cell Biol.">
        <title>Synaptopodin: an actin-associated protein in telencephalic dendrites and renal podocytes.</title>
        <authorList>
            <person name="Mundel P."/>
            <person name="Heid H.W."/>
            <person name="Mundel T.M."/>
            <person name="Krueger M."/>
            <person name="Reiser J."/>
            <person name="Kriz W."/>
        </authorList>
    </citation>
    <scope>NUCLEOTIDE SEQUENCE [MRNA] (ISOFORM 3)</scope>
    <scope>TISSUE SPECIFICITY</scope>
    <source>
        <tissue>Brain</tissue>
    </source>
</reference>
<reference key="2">
    <citation type="submission" date="2002-04" db="EMBL/GenBank/DDBJ databases">
        <title>Loss of spine apparatus associated protein synaptopodin in Alzheimer's disease.</title>
        <authorList>
            <person name="Reddy P.H."/>
            <person name="Gutala R."/>
        </authorList>
    </citation>
    <scope>NUCLEOTIDE SEQUENCE [MRNA] (ISOFORM 2)</scope>
    <source>
        <tissue>Brain</tissue>
        <tissue>Kidney</tissue>
    </source>
</reference>
<reference key="3">
    <citation type="journal article" date="1999" name="DNA Res.">
        <title>Prediction of the coding sequences of unidentified human genes. XIV. The complete sequences of 100 new cDNA clones from brain which code for large proteins in vitro.</title>
        <authorList>
            <person name="Kikuno R."/>
            <person name="Nagase T."/>
            <person name="Ishikawa K."/>
            <person name="Hirosawa M."/>
            <person name="Miyajima N."/>
            <person name="Tanaka A."/>
            <person name="Kotani H."/>
            <person name="Nomura N."/>
            <person name="Ohara O."/>
        </authorList>
    </citation>
    <scope>NUCLEOTIDE SEQUENCE [LARGE SCALE MRNA] (ISOFORM 2)</scope>
    <source>
        <tissue>Brain</tissue>
    </source>
</reference>
<reference key="4">
    <citation type="journal article" date="2004" name="Nat. Genet.">
        <title>Complete sequencing and characterization of 21,243 full-length human cDNAs.</title>
        <authorList>
            <person name="Ota T."/>
            <person name="Suzuki Y."/>
            <person name="Nishikawa T."/>
            <person name="Otsuki T."/>
            <person name="Sugiyama T."/>
            <person name="Irie R."/>
            <person name="Wakamatsu A."/>
            <person name="Hayashi K."/>
            <person name="Sato H."/>
            <person name="Nagai K."/>
            <person name="Kimura K."/>
            <person name="Makita H."/>
            <person name="Sekine M."/>
            <person name="Obayashi M."/>
            <person name="Nishi T."/>
            <person name="Shibahara T."/>
            <person name="Tanaka T."/>
            <person name="Ishii S."/>
            <person name="Yamamoto J."/>
            <person name="Saito K."/>
            <person name="Kawai Y."/>
            <person name="Isono Y."/>
            <person name="Nakamura Y."/>
            <person name="Nagahari K."/>
            <person name="Murakami K."/>
            <person name="Yasuda T."/>
            <person name="Iwayanagi T."/>
            <person name="Wagatsuma M."/>
            <person name="Shiratori A."/>
            <person name="Sudo H."/>
            <person name="Hosoiri T."/>
            <person name="Kaku Y."/>
            <person name="Kodaira H."/>
            <person name="Kondo H."/>
            <person name="Sugawara M."/>
            <person name="Takahashi M."/>
            <person name="Kanda K."/>
            <person name="Yokoi T."/>
            <person name="Furuya T."/>
            <person name="Kikkawa E."/>
            <person name="Omura Y."/>
            <person name="Abe K."/>
            <person name="Kamihara K."/>
            <person name="Katsuta N."/>
            <person name="Sato K."/>
            <person name="Tanikawa M."/>
            <person name="Yamazaki M."/>
            <person name="Ninomiya K."/>
            <person name="Ishibashi T."/>
            <person name="Yamashita H."/>
            <person name="Murakawa K."/>
            <person name="Fujimori K."/>
            <person name="Tanai H."/>
            <person name="Kimata M."/>
            <person name="Watanabe M."/>
            <person name="Hiraoka S."/>
            <person name="Chiba Y."/>
            <person name="Ishida S."/>
            <person name="Ono Y."/>
            <person name="Takiguchi S."/>
            <person name="Watanabe S."/>
            <person name="Yosida M."/>
            <person name="Hotuta T."/>
            <person name="Kusano J."/>
            <person name="Kanehori K."/>
            <person name="Takahashi-Fujii A."/>
            <person name="Hara H."/>
            <person name="Tanase T.-O."/>
            <person name="Nomura Y."/>
            <person name="Togiya S."/>
            <person name="Komai F."/>
            <person name="Hara R."/>
            <person name="Takeuchi K."/>
            <person name="Arita M."/>
            <person name="Imose N."/>
            <person name="Musashino K."/>
            <person name="Yuuki H."/>
            <person name="Oshima A."/>
            <person name="Sasaki N."/>
            <person name="Aotsuka S."/>
            <person name="Yoshikawa Y."/>
            <person name="Matsunawa H."/>
            <person name="Ichihara T."/>
            <person name="Shiohata N."/>
            <person name="Sano S."/>
            <person name="Moriya S."/>
            <person name="Momiyama H."/>
            <person name="Satoh N."/>
            <person name="Takami S."/>
            <person name="Terashima Y."/>
            <person name="Suzuki O."/>
            <person name="Nakagawa S."/>
            <person name="Senoh A."/>
            <person name="Mizoguchi H."/>
            <person name="Goto Y."/>
            <person name="Shimizu F."/>
            <person name="Wakebe H."/>
            <person name="Hishigaki H."/>
            <person name="Watanabe T."/>
            <person name="Sugiyama A."/>
            <person name="Takemoto M."/>
            <person name="Kawakami B."/>
            <person name="Yamazaki M."/>
            <person name="Watanabe K."/>
            <person name="Kumagai A."/>
            <person name="Itakura S."/>
            <person name="Fukuzumi Y."/>
            <person name="Fujimori Y."/>
            <person name="Komiyama M."/>
            <person name="Tashiro H."/>
            <person name="Tanigami A."/>
            <person name="Fujiwara T."/>
            <person name="Ono T."/>
            <person name="Yamada K."/>
            <person name="Fujii Y."/>
            <person name="Ozaki K."/>
            <person name="Hirao M."/>
            <person name="Ohmori Y."/>
            <person name="Kawabata A."/>
            <person name="Hikiji T."/>
            <person name="Kobatake N."/>
            <person name="Inagaki H."/>
            <person name="Ikema Y."/>
            <person name="Okamoto S."/>
            <person name="Okitani R."/>
            <person name="Kawakami T."/>
            <person name="Noguchi S."/>
            <person name="Itoh T."/>
            <person name="Shigeta K."/>
            <person name="Senba T."/>
            <person name="Matsumura K."/>
            <person name="Nakajima Y."/>
            <person name="Mizuno T."/>
            <person name="Morinaga M."/>
            <person name="Sasaki M."/>
            <person name="Togashi T."/>
            <person name="Oyama M."/>
            <person name="Hata H."/>
            <person name="Watanabe M."/>
            <person name="Komatsu T."/>
            <person name="Mizushima-Sugano J."/>
            <person name="Satoh T."/>
            <person name="Shirai Y."/>
            <person name="Takahashi Y."/>
            <person name="Nakagawa K."/>
            <person name="Okumura K."/>
            <person name="Nagase T."/>
            <person name="Nomura N."/>
            <person name="Kikuchi H."/>
            <person name="Masuho Y."/>
            <person name="Yamashita R."/>
            <person name="Nakai K."/>
            <person name="Yada T."/>
            <person name="Nakamura Y."/>
            <person name="Ohara O."/>
            <person name="Isogai T."/>
            <person name="Sugano S."/>
        </authorList>
    </citation>
    <scope>NUCLEOTIDE SEQUENCE [LARGE SCALE MRNA] (ISOFORMS 1 AND 3)</scope>
    <source>
        <tissue>Thalamus</tissue>
    </source>
</reference>
<reference key="5">
    <citation type="journal article" date="2007" name="BMC Genomics">
        <title>The full-ORF clone resource of the German cDNA consortium.</title>
        <authorList>
            <person name="Bechtel S."/>
            <person name="Rosenfelder H."/>
            <person name="Duda A."/>
            <person name="Schmidt C.P."/>
            <person name="Ernst U."/>
            <person name="Wellenreuther R."/>
            <person name="Mehrle A."/>
            <person name="Schuster C."/>
            <person name="Bahr A."/>
            <person name="Bloecker H."/>
            <person name="Heubner D."/>
            <person name="Hoerlein A."/>
            <person name="Michel G."/>
            <person name="Wedler H."/>
            <person name="Koehrer K."/>
            <person name="Ottenwaelder B."/>
            <person name="Poustka A."/>
            <person name="Wiemann S."/>
            <person name="Schupp I."/>
        </authorList>
    </citation>
    <scope>NUCLEOTIDE SEQUENCE [LARGE SCALE MRNA] (ISOFORM 1)</scope>
    <source>
        <tissue>Skeletal muscle</tissue>
    </source>
</reference>
<reference key="6">
    <citation type="submission" date="2005-09" db="EMBL/GenBank/DDBJ databases">
        <authorList>
            <person name="Mural R.J."/>
            <person name="Istrail S."/>
            <person name="Sutton G.G."/>
            <person name="Florea L."/>
            <person name="Halpern A.L."/>
            <person name="Mobarry C.M."/>
            <person name="Lippert R."/>
            <person name="Walenz B."/>
            <person name="Shatkay H."/>
            <person name="Dew I."/>
            <person name="Miller J.R."/>
            <person name="Flanigan M.J."/>
            <person name="Edwards N.J."/>
            <person name="Bolanos R."/>
            <person name="Fasulo D."/>
            <person name="Halldorsson B.V."/>
            <person name="Hannenhalli S."/>
            <person name="Turner R."/>
            <person name="Yooseph S."/>
            <person name="Lu F."/>
            <person name="Nusskern D.R."/>
            <person name="Shue B.C."/>
            <person name="Zheng X.H."/>
            <person name="Zhong F."/>
            <person name="Delcher A.L."/>
            <person name="Huson D.H."/>
            <person name="Kravitz S.A."/>
            <person name="Mouchard L."/>
            <person name="Reinert K."/>
            <person name="Remington K.A."/>
            <person name="Clark A.G."/>
            <person name="Waterman M.S."/>
            <person name="Eichler E.E."/>
            <person name="Adams M.D."/>
            <person name="Hunkapiller M.W."/>
            <person name="Myers E.W."/>
            <person name="Venter J.C."/>
        </authorList>
    </citation>
    <scope>NUCLEOTIDE SEQUENCE [LARGE SCALE GENOMIC DNA]</scope>
</reference>
<reference key="7">
    <citation type="journal article" date="2004" name="Genome Res.">
        <title>The status, quality, and expansion of the NIH full-length cDNA project: the Mammalian Gene Collection (MGC).</title>
        <authorList>
            <consortium name="The MGC Project Team"/>
        </authorList>
    </citation>
    <scope>NUCLEOTIDE SEQUENCE [LARGE SCALE MRNA] (ISOFORM 3)</scope>
</reference>
<reference key="8">
    <citation type="journal article" date="2002" name="J. Biol. Chem.">
        <title>Interaction of two actin-binding proteins, synaptopodin and alpha-actinin-4, with the tight junction protein MAGI-1.</title>
        <authorList>
            <person name="Patrie K.M."/>
            <person name="Drescher A.J."/>
            <person name="Welihinda A."/>
            <person name="Mundel P."/>
            <person name="Margolis B."/>
        </authorList>
    </citation>
    <scope>INTERACTION WITH BAIAP1</scope>
    <scope>SUBCELLULAR LOCATION</scope>
</reference>
<reference key="9">
    <citation type="journal article" date="2005" name="Nat. Biotechnol.">
        <title>Immunoaffinity profiling of tyrosine phosphorylation in cancer cells.</title>
        <authorList>
            <person name="Rush J."/>
            <person name="Moritz A."/>
            <person name="Lee K.A."/>
            <person name="Guo A."/>
            <person name="Goss V.L."/>
            <person name="Spek E.J."/>
            <person name="Zhang H."/>
            <person name="Zha X.-M."/>
            <person name="Polakiewicz R.D."/>
            <person name="Comb M.J."/>
        </authorList>
    </citation>
    <scope>IDENTIFICATION BY MASS SPECTROMETRY [LARGE SCALE ANALYSIS]</scope>
</reference>
<reference key="10">
    <citation type="journal article" date="2006" name="Cell">
        <title>Global, in vivo, and site-specific phosphorylation dynamics in signaling networks.</title>
        <authorList>
            <person name="Olsen J.V."/>
            <person name="Blagoev B."/>
            <person name="Gnad F."/>
            <person name="Macek B."/>
            <person name="Kumar C."/>
            <person name="Mortensen P."/>
            <person name="Mann M."/>
        </authorList>
    </citation>
    <scope>PHOSPHORYLATION [LARGE SCALE ANALYSIS] AT SER-685</scope>
    <scope>PHOSPHORYLATION [LARGE SCALE ANALYSIS] AT SER-871 (ISOFORM 2)</scope>
    <scope>IDENTIFICATION BY MASS SPECTROMETRY [LARGE SCALE ANALYSIS]</scope>
    <source>
        <tissue>Cervix carcinoma</tissue>
    </source>
</reference>
<reference key="11">
    <citation type="journal article" date="2008" name="J. Am. Soc. Nephrol.">
        <title>KIBRA modulates directional migration of podocytes.</title>
        <authorList>
            <person name="Duning K."/>
            <person name="Schurek E.M."/>
            <person name="Schlueter M."/>
            <person name="Bayer M."/>
            <person name="Reinhardt H.C."/>
            <person name="Schwab A."/>
            <person name="Schaefer L."/>
            <person name="Benzing T."/>
            <person name="Schermer B."/>
            <person name="Saleem M.A."/>
            <person name="Huber T.B."/>
            <person name="Bachmann S."/>
            <person name="Kremerskothen J."/>
            <person name="Weide T."/>
            <person name="Pavenstaedt H."/>
        </authorList>
    </citation>
    <scope>INTERACTION WITH WWC1</scope>
</reference>
<reference key="12">
    <citation type="journal article" date="2008" name="J. Proteome Res.">
        <title>Combining protein-based IMAC, peptide-based IMAC, and MudPIT for efficient phosphoproteomic analysis.</title>
        <authorList>
            <person name="Cantin G.T."/>
            <person name="Yi W."/>
            <person name="Lu B."/>
            <person name="Park S.K."/>
            <person name="Xu T."/>
            <person name="Lee J.-D."/>
            <person name="Yates J.R. III"/>
        </authorList>
    </citation>
    <scope>PHOSPHORYLATION [LARGE SCALE ANALYSIS] AT SER-685</scope>
    <scope>PHOSPHORYLATION [LARGE SCALE ANALYSIS] AT SER-871 (ISOFORM 2)</scope>
    <scope>IDENTIFICATION BY MASS SPECTROMETRY [LARGE SCALE ANALYSIS]</scope>
    <source>
        <tissue>Cervix carcinoma</tissue>
    </source>
</reference>
<reference key="13">
    <citation type="journal article" date="2008" name="Proc. Natl. Acad. Sci. U.S.A.">
        <title>A quantitative atlas of mitotic phosphorylation.</title>
        <authorList>
            <person name="Dephoure N."/>
            <person name="Zhou C."/>
            <person name="Villen J."/>
            <person name="Beausoleil S.A."/>
            <person name="Bakalarski C.E."/>
            <person name="Elledge S.J."/>
            <person name="Gygi S.P."/>
        </authorList>
    </citation>
    <scope>PHOSPHORYLATION [LARGE SCALE ANALYSIS] AT SER-263; SER-525; SER-580; SER-685; SER-702; THR-746; SER-754 AND SER-833</scope>
    <scope>PHOSPHORYLATION [LARGE SCALE ANALYSIS] AT SER-826 AND SER-894 (ISOFORM 2)</scope>
    <scope>IDENTIFICATION BY MASS SPECTROMETRY [LARGE SCALE ANALYSIS]</scope>
    <source>
        <tissue>Cervix carcinoma</tissue>
    </source>
</reference>
<reference key="14">
    <citation type="journal article" date="2009" name="J. Proteome Res.">
        <title>Glycoproteomics analysis of human liver tissue by combination of multiple enzyme digestion and hydrazide chemistry.</title>
        <authorList>
            <person name="Chen R."/>
            <person name="Jiang X."/>
            <person name="Sun D."/>
            <person name="Han G."/>
            <person name="Wang F."/>
            <person name="Ye M."/>
            <person name="Wang L."/>
            <person name="Zou H."/>
        </authorList>
    </citation>
    <scope>GLYCOSYLATION [LARGE SCALE ANALYSIS] AT ASN-330</scope>
    <source>
        <tissue>Liver</tissue>
    </source>
</reference>
<reference key="15">
    <citation type="journal article" date="2010" name="Sci. Signal.">
        <title>Quantitative phosphoproteomics reveals widespread full phosphorylation site occupancy during mitosis.</title>
        <authorList>
            <person name="Olsen J.V."/>
            <person name="Vermeulen M."/>
            <person name="Santamaria A."/>
            <person name="Kumar C."/>
            <person name="Miller M.L."/>
            <person name="Jensen L.J."/>
            <person name="Gnad F."/>
            <person name="Cox J."/>
            <person name="Jensen T.S."/>
            <person name="Nigg E.A."/>
            <person name="Brunak S."/>
            <person name="Mann M."/>
        </authorList>
    </citation>
    <scope>PHOSPHORYLATION [LARGE SCALE ANALYSIS] AT SER-263; SER-580; SER-685; THR-746 AND SER-833</scope>
    <scope>PHOSPHORYLATION [LARGE SCALE ANALYSIS] AT SER-854 AND SER-871 (ISOFORM 2)</scope>
    <scope>IDENTIFICATION BY MASS SPECTROMETRY [LARGE SCALE ANALYSIS]</scope>
    <source>
        <tissue>Cervix carcinoma</tissue>
    </source>
</reference>
<reference key="16">
    <citation type="journal article" date="2012" name="Proc. Natl. Acad. Sci. U.S.A.">
        <title>N-terminal acetylome analyses and functional insights of the N-terminal acetyltransferase NatB.</title>
        <authorList>
            <person name="Van Damme P."/>
            <person name="Lasa M."/>
            <person name="Polevoda B."/>
            <person name="Gazquez C."/>
            <person name="Elosegui-Artola A."/>
            <person name="Kim D.S."/>
            <person name="De Juan-Pardo E."/>
            <person name="Demeyer K."/>
            <person name="Hole K."/>
            <person name="Larrea E."/>
            <person name="Timmerman E."/>
            <person name="Prieto J."/>
            <person name="Arnesen T."/>
            <person name="Sherman F."/>
            <person name="Gevaert K."/>
            <person name="Aldabe R."/>
        </authorList>
    </citation>
    <scope>ACETYLATION [LARGE SCALE ANALYSIS] AT MET-1 (ISOFORMS 2 AND 3)</scope>
    <scope>IDENTIFICATION BY MASS SPECTROMETRY [LARGE SCALE ANALYSIS]</scope>
</reference>
<reference key="17">
    <citation type="journal article" date="2013" name="J. Proteome Res.">
        <title>Toward a comprehensive characterization of a human cancer cell phosphoproteome.</title>
        <authorList>
            <person name="Zhou H."/>
            <person name="Di Palma S."/>
            <person name="Preisinger C."/>
            <person name="Peng M."/>
            <person name="Polat A.N."/>
            <person name="Heck A.J."/>
            <person name="Mohammed S."/>
        </authorList>
    </citation>
    <scope>PHOSPHORYLATION [LARGE SCALE ANALYSIS] AT SER-263; SER-525; SER-580; SER-685; SER-702; SER-754 AND SER-833</scope>
    <scope>IDENTIFICATION BY MASS SPECTROMETRY [LARGE SCALE ANALYSIS]</scope>
    <source>
        <tissue>Cervix carcinoma</tissue>
    </source>
</reference>
<reference key="18">
    <citation type="journal article" date="2014" name="J. Proteomics">
        <title>An enzyme assisted RP-RPLC approach for in-depth analysis of human liver phosphoproteome.</title>
        <authorList>
            <person name="Bian Y."/>
            <person name="Song C."/>
            <person name="Cheng K."/>
            <person name="Dong M."/>
            <person name="Wang F."/>
            <person name="Huang J."/>
            <person name="Sun D."/>
            <person name="Wang L."/>
            <person name="Ye M."/>
            <person name="Zou H."/>
        </authorList>
    </citation>
    <scope>PHOSPHORYLATION [LARGE SCALE ANALYSIS] AT SER-263; SER-580; SER-685; SER-754; SER-833 AND SER-854</scope>
    <scope>PHOSPHORYLATION [LARGE SCALE ANALYSIS] AT SER-738; SER-784; SER-804; SER-812; SER-826; SER-854 AND SER-894 (ISOFORM 2)</scope>
    <scope>IDENTIFICATION BY MASS SPECTROMETRY [LARGE SCALE ANALYSIS]</scope>
    <source>
        <tissue>Liver</tissue>
    </source>
</reference>
<reference key="19">
    <citation type="journal article" date="2019" name="Am. J. Hum. Genet.">
        <title>TBC1D8B Loss-of-Function Mutations Lead to X-Linked Nephrotic Syndrome via Defective Trafficking Pathways.</title>
        <authorList>
            <person name="Dorval G."/>
            <person name="Kuzmuk V."/>
            <person name="Gribouval O."/>
            <person name="Welsh G.I."/>
            <person name="Bierzynska A."/>
            <person name="Schmitt A."/>
            <person name="Miserey-Lenkei S."/>
            <person name="Koziell A."/>
            <person name="Haq S."/>
            <person name="Benmerah A."/>
            <person name="Mollet G."/>
            <person name="Boyer O."/>
            <person name="Saleem M.A."/>
            <person name="Antignac C."/>
        </authorList>
    </citation>
    <scope>SUBCELLULAR LOCATION</scope>
</reference>
<name>SYNPO_HUMAN</name>
<dbReference type="EMBL" id="Y11072">
    <property type="protein sequence ID" value="CAA71955.1"/>
    <property type="molecule type" value="mRNA"/>
</dbReference>
<dbReference type="EMBL" id="AF499136">
    <property type="protein sequence ID" value="AAQ07402.1"/>
    <property type="molecule type" value="mRNA"/>
</dbReference>
<dbReference type="EMBL" id="AF499137">
    <property type="protein sequence ID" value="AAQ07403.1"/>
    <property type="molecule type" value="mRNA"/>
</dbReference>
<dbReference type="EMBL" id="AB028952">
    <property type="protein sequence ID" value="BAA82981.2"/>
    <property type="status" value="ALT_INIT"/>
    <property type="molecule type" value="mRNA"/>
</dbReference>
<dbReference type="EMBL" id="AK127049">
    <property type="status" value="NOT_ANNOTATED_CDS"/>
    <property type="molecule type" value="mRNA"/>
</dbReference>
<dbReference type="EMBL" id="AK290178">
    <property type="protein sequence ID" value="BAF82867.1"/>
    <property type="molecule type" value="mRNA"/>
</dbReference>
<dbReference type="EMBL" id="AL831818">
    <property type="protein sequence ID" value="CAD38532.1"/>
    <property type="molecule type" value="mRNA"/>
</dbReference>
<dbReference type="EMBL" id="CH471062">
    <property type="protein sequence ID" value="EAW61715.1"/>
    <property type="molecule type" value="Genomic_DNA"/>
</dbReference>
<dbReference type="EMBL" id="CH471062">
    <property type="protein sequence ID" value="EAW61716.1"/>
    <property type="molecule type" value="Genomic_DNA"/>
</dbReference>
<dbReference type="EMBL" id="BC142683">
    <property type="protein sequence ID" value="AAI42684.1"/>
    <property type="molecule type" value="mRNA"/>
</dbReference>
<dbReference type="EMBL" id="BC146665">
    <property type="protein sequence ID" value="AAI46666.1"/>
    <property type="molecule type" value="mRNA"/>
</dbReference>
<dbReference type="CCDS" id="CCDS4308.1">
    <molecule id="Q8N3V7-2"/>
</dbReference>
<dbReference type="CCDS" id="CCDS54937.1">
    <molecule id="Q8N3V7-1"/>
</dbReference>
<dbReference type="CCDS" id="CCDS54938.1">
    <molecule id="Q8N3V7-3"/>
</dbReference>
<dbReference type="RefSeq" id="NP_001103444.1">
    <molecule id="Q8N3V7-3"/>
    <property type="nucleotide sequence ID" value="NM_001109974.3"/>
</dbReference>
<dbReference type="RefSeq" id="NP_001159680.1">
    <molecule id="Q8N3V7-1"/>
    <property type="nucleotide sequence ID" value="NM_001166208.2"/>
</dbReference>
<dbReference type="RefSeq" id="NP_001159681.1">
    <molecule id="Q8N3V7-1"/>
    <property type="nucleotide sequence ID" value="NM_001166209.2"/>
</dbReference>
<dbReference type="RefSeq" id="NP_009217.3">
    <molecule id="Q8N3V7-2"/>
    <property type="nucleotide sequence ID" value="NM_007286.5"/>
</dbReference>
<dbReference type="RefSeq" id="XP_005268427.1">
    <property type="nucleotide sequence ID" value="XM_005268370.1"/>
</dbReference>
<dbReference type="RefSeq" id="XP_005268428.1">
    <molecule id="Q8N3V7-2"/>
    <property type="nucleotide sequence ID" value="XM_005268371.2"/>
</dbReference>
<dbReference type="RefSeq" id="XP_011535854.1">
    <property type="nucleotide sequence ID" value="XM_011537552.2"/>
</dbReference>
<dbReference type="RefSeq" id="XP_024310119.2">
    <molecule id="Q8N3V7-3"/>
    <property type="nucleotide sequence ID" value="XM_024454351.2"/>
</dbReference>
<dbReference type="RefSeq" id="XP_054207516.1">
    <molecule id="Q8N3V7-2"/>
    <property type="nucleotide sequence ID" value="XM_054351541.1"/>
</dbReference>
<dbReference type="RefSeq" id="XP_054207517.1">
    <molecule id="Q8N3V7-2"/>
    <property type="nucleotide sequence ID" value="XM_054351542.1"/>
</dbReference>
<dbReference type="RefSeq" id="XP_054207518.1">
    <molecule id="Q8N3V7-2"/>
    <property type="nucleotide sequence ID" value="XM_054351543.1"/>
</dbReference>
<dbReference type="RefSeq" id="XP_054207519.1">
    <molecule id="Q8N3V7-2"/>
    <property type="nucleotide sequence ID" value="XM_054351544.1"/>
</dbReference>
<dbReference type="RefSeq" id="XP_054207520.1">
    <molecule id="Q8N3V7-3"/>
    <property type="nucleotide sequence ID" value="XM_054351545.1"/>
</dbReference>
<dbReference type="BioGRID" id="116474">
    <property type="interactions" value="194"/>
</dbReference>
<dbReference type="FunCoup" id="Q8N3V7">
    <property type="interactions" value="723"/>
</dbReference>
<dbReference type="IntAct" id="Q8N3V7">
    <property type="interactions" value="181"/>
</dbReference>
<dbReference type="MINT" id="Q8N3V7"/>
<dbReference type="STRING" id="9606.ENSP00000377789"/>
<dbReference type="GlyConnect" id="2889">
    <property type="glycosylation" value="1 O-GlcNAc glycan (1 site)"/>
</dbReference>
<dbReference type="GlyCosmos" id="Q8N3V7">
    <property type="glycosylation" value="14 sites, 1 glycan"/>
</dbReference>
<dbReference type="GlyGen" id="Q8N3V7">
    <property type="glycosylation" value="16 sites, 1 O-linked glycan (14 sites)"/>
</dbReference>
<dbReference type="iPTMnet" id="Q8N3V7"/>
<dbReference type="PhosphoSitePlus" id="Q8N3V7"/>
<dbReference type="SwissPalm" id="Q8N3V7"/>
<dbReference type="BioMuta" id="SYNPO"/>
<dbReference type="DMDM" id="48428650"/>
<dbReference type="jPOST" id="Q8N3V7"/>
<dbReference type="MassIVE" id="Q8N3V7"/>
<dbReference type="PaxDb" id="9606-ENSP00000377789"/>
<dbReference type="PeptideAtlas" id="Q8N3V7"/>
<dbReference type="ProteomicsDB" id="71838">
    <molecule id="Q8N3V7-1"/>
</dbReference>
<dbReference type="ProteomicsDB" id="71839">
    <molecule id="Q8N3V7-2"/>
</dbReference>
<dbReference type="ProteomicsDB" id="71840">
    <molecule id="Q8N3V7-3"/>
</dbReference>
<dbReference type="Pumba" id="Q8N3V7"/>
<dbReference type="Antibodypedia" id="16210">
    <property type="antibodies" value="305 antibodies from 35 providers"/>
</dbReference>
<dbReference type="DNASU" id="11346"/>
<dbReference type="Ensembl" id="ENST00000307662.5">
    <molecule id="Q8N3V7-2"/>
    <property type="protein sequence ID" value="ENSP00000302139.4"/>
    <property type="gene ID" value="ENSG00000171992.13"/>
</dbReference>
<dbReference type="Ensembl" id="ENST00000394243.5">
    <molecule id="Q8N3V7-1"/>
    <property type="protein sequence ID" value="ENSP00000377789.1"/>
    <property type="gene ID" value="ENSG00000171992.13"/>
</dbReference>
<dbReference type="Ensembl" id="ENST00000519664.1">
    <molecule id="Q8N3V7-3"/>
    <property type="protein sequence ID" value="ENSP00000429268.1"/>
    <property type="gene ID" value="ENSG00000171992.13"/>
</dbReference>
<dbReference type="Ensembl" id="ENST00000522122.1">
    <molecule id="Q8N3V7-1"/>
    <property type="protein sequence ID" value="ENSP00000428378.1"/>
    <property type="gene ID" value="ENSG00000171992.13"/>
</dbReference>
<dbReference type="GeneID" id="11346"/>
<dbReference type="KEGG" id="hsa:11346"/>
<dbReference type="MANE-Select" id="ENST00000307662.5">
    <molecule id="Q8N3V7-2"/>
    <property type="protein sequence ID" value="ENSP00000302139.4"/>
    <property type="RefSeq nucleotide sequence ID" value="NM_007286.6"/>
    <property type="RefSeq protein sequence ID" value="NP_009217.3"/>
</dbReference>
<dbReference type="UCSC" id="uc003lsn.4">
    <molecule id="Q8N3V7-1"/>
    <property type="organism name" value="human"/>
</dbReference>
<dbReference type="AGR" id="HGNC:30672"/>
<dbReference type="CTD" id="11346"/>
<dbReference type="DisGeNET" id="11346"/>
<dbReference type="GeneCards" id="SYNPO"/>
<dbReference type="HGNC" id="HGNC:30672">
    <property type="gene designation" value="SYNPO"/>
</dbReference>
<dbReference type="HPA" id="ENSG00000171992">
    <property type="expression patterns" value="Group enriched (heart muscle, skeletal muscle, tongue)"/>
</dbReference>
<dbReference type="MalaCards" id="SYNPO"/>
<dbReference type="MIM" id="608155">
    <property type="type" value="gene"/>
</dbReference>
<dbReference type="neXtProt" id="NX_Q8N3V7"/>
<dbReference type="OpenTargets" id="ENSG00000171992"/>
<dbReference type="PharmGKB" id="PA134863299"/>
<dbReference type="VEuPathDB" id="HostDB:ENSG00000171992"/>
<dbReference type="eggNOG" id="ENOG502R7RM">
    <property type="taxonomic scope" value="Eukaryota"/>
</dbReference>
<dbReference type="GeneTree" id="ENSGT00950000183054"/>
<dbReference type="HOGENOM" id="CLU_013103_0_0_1"/>
<dbReference type="InParanoid" id="Q8N3V7"/>
<dbReference type="OMA" id="QPPYQMR"/>
<dbReference type="OrthoDB" id="8943025at2759"/>
<dbReference type="PAN-GO" id="Q8N3V7">
    <property type="GO annotations" value="9 GO annotations based on evolutionary models"/>
</dbReference>
<dbReference type="PhylomeDB" id="Q8N3V7"/>
<dbReference type="TreeFam" id="TF330867"/>
<dbReference type="PathwayCommons" id="Q8N3V7"/>
<dbReference type="SignaLink" id="Q8N3V7"/>
<dbReference type="BioGRID-ORCS" id="11346">
    <property type="hits" value="16 hits in 1151 CRISPR screens"/>
</dbReference>
<dbReference type="CD-CODE" id="FB4E32DD">
    <property type="entry name" value="Presynaptic clusters and postsynaptic densities"/>
</dbReference>
<dbReference type="ChiTaRS" id="SYNPO">
    <property type="organism name" value="human"/>
</dbReference>
<dbReference type="GeneWiki" id="SYNPO"/>
<dbReference type="GenomeRNAi" id="11346"/>
<dbReference type="Pharos" id="Q8N3V7">
    <property type="development level" value="Tbio"/>
</dbReference>
<dbReference type="PRO" id="PR:Q8N3V7"/>
<dbReference type="Proteomes" id="UP000005640">
    <property type="component" value="Chromosome 5"/>
</dbReference>
<dbReference type="RNAct" id="Q8N3V7">
    <property type="molecule type" value="protein"/>
</dbReference>
<dbReference type="Bgee" id="ENSG00000171992">
    <property type="expression patterns" value="Expressed in hindlimb stylopod muscle and 203 other cell types or tissues"/>
</dbReference>
<dbReference type="GO" id="GO:0015629">
    <property type="term" value="C:actin cytoskeleton"/>
    <property type="evidence" value="ECO:0000314"/>
    <property type="project" value="LIFEdb"/>
</dbReference>
<dbReference type="GO" id="GO:0005923">
    <property type="term" value="C:bicellular tight junction"/>
    <property type="evidence" value="ECO:0007669"/>
    <property type="project" value="UniProtKB-SubCell"/>
</dbReference>
<dbReference type="GO" id="GO:0005829">
    <property type="term" value="C:cytosol"/>
    <property type="evidence" value="ECO:0000314"/>
    <property type="project" value="HPA"/>
</dbReference>
<dbReference type="GO" id="GO:0043197">
    <property type="term" value="C:dendritic spine"/>
    <property type="evidence" value="ECO:0000304"/>
    <property type="project" value="UniProtKB"/>
</dbReference>
<dbReference type="GO" id="GO:0098978">
    <property type="term" value="C:glutamatergic synapse"/>
    <property type="evidence" value="ECO:0007669"/>
    <property type="project" value="Ensembl"/>
</dbReference>
<dbReference type="GO" id="GO:0005634">
    <property type="term" value="C:nucleus"/>
    <property type="evidence" value="ECO:0000318"/>
    <property type="project" value="GO_Central"/>
</dbReference>
<dbReference type="GO" id="GO:0043204">
    <property type="term" value="C:perikaryon"/>
    <property type="evidence" value="ECO:0007669"/>
    <property type="project" value="UniProtKB-SubCell"/>
</dbReference>
<dbReference type="GO" id="GO:0005886">
    <property type="term" value="C:plasma membrane"/>
    <property type="evidence" value="ECO:0000314"/>
    <property type="project" value="HPA"/>
</dbReference>
<dbReference type="GO" id="GO:0014069">
    <property type="term" value="C:postsynaptic density"/>
    <property type="evidence" value="ECO:0007669"/>
    <property type="project" value="UniProtKB-SubCell"/>
</dbReference>
<dbReference type="GO" id="GO:0097444">
    <property type="term" value="C:spine apparatus"/>
    <property type="evidence" value="ECO:0000318"/>
    <property type="project" value="GO_Central"/>
</dbReference>
<dbReference type="GO" id="GO:0001725">
    <property type="term" value="C:stress fiber"/>
    <property type="evidence" value="ECO:0000318"/>
    <property type="project" value="GO_Central"/>
</dbReference>
<dbReference type="GO" id="GO:0030018">
    <property type="term" value="C:Z disc"/>
    <property type="evidence" value="ECO:0000318"/>
    <property type="project" value="GO_Central"/>
</dbReference>
<dbReference type="GO" id="GO:0003779">
    <property type="term" value="F:actin binding"/>
    <property type="evidence" value="ECO:0000250"/>
    <property type="project" value="UniProtKB"/>
</dbReference>
<dbReference type="GO" id="GO:0032233">
    <property type="term" value="P:positive regulation of actin filament bundle assembly"/>
    <property type="evidence" value="ECO:0000250"/>
    <property type="project" value="UniProtKB"/>
</dbReference>
<dbReference type="GO" id="GO:0051492">
    <property type="term" value="P:regulation of stress fiber assembly"/>
    <property type="evidence" value="ECO:0000250"/>
    <property type="project" value="UniProtKB"/>
</dbReference>
<dbReference type="GO" id="GO:1905355">
    <property type="term" value="P:spine apparatus assembly"/>
    <property type="evidence" value="ECO:0000318"/>
    <property type="project" value="GO_Central"/>
</dbReference>
<dbReference type="DisProt" id="DP02911"/>
<dbReference type="InterPro" id="IPR051976">
    <property type="entry name" value="Synaptopodin_domain"/>
</dbReference>
<dbReference type="PANTHER" id="PTHR24217">
    <property type="entry name" value="PUTATIVE-RELATED"/>
    <property type="match status" value="1"/>
</dbReference>
<dbReference type="PANTHER" id="PTHR24217:SF13">
    <property type="entry name" value="SYNAPTOPODIN"/>
    <property type="match status" value="1"/>
</dbReference>